<name>TSAD_ANAMM</name>
<sequence length="341" mass="36129">MSGVGCILGIETSCDETAVAVLNQRSVLSHEVLSQKEHSSFGGVVPEIAARAHSDFLHVLVSKAMGGAHIGFSDLSAIAVTSGPGLVGSLIVGVMLAKAIAYVAHKPIIAVNHLEAHALVARMIYADLEFPFLVLIISGGHCQFLIAHDVGRYTKLGESVDDSLGESFDKVARMLGLGYPGGPEVESCALKGDAHRFPFPRALKSRPGCNFSFSGLKTAVRYTIAKEGKLDNQALYDICASFQQCVGEILVSRIANAMAAAKSADSSISKMVVSGGVAANNFLRGSIRKCANELGFDAIFPPQELCTDNGIMVGWAGLENLRKGNFSSLELIPRARWPLCP</sequence>
<dbReference type="EC" id="2.3.1.234" evidence="1"/>
<dbReference type="EMBL" id="CP000030">
    <property type="protein sequence ID" value="AAV86574.1"/>
    <property type="molecule type" value="Genomic_DNA"/>
</dbReference>
<dbReference type="RefSeq" id="WP_011114336.1">
    <property type="nucleotide sequence ID" value="NC_004842.2"/>
</dbReference>
<dbReference type="SMR" id="Q5PAV6"/>
<dbReference type="KEGG" id="ama:AM561"/>
<dbReference type="HOGENOM" id="CLU_023208_0_2_5"/>
<dbReference type="GO" id="GO:0005737">
    <property type="term" value="C:cytoplasm"/>
    <property type="evidence" value="ECO:0007669"/>
    <property type="project" value="UniProtKB-SubCell"/>
</dbReference>
<dbReference type="GO" id="GO:0005506">
    <property type="term" value="F:iron ion binding"/>
    <property type="evidence" value="ECO:0007669"/>
    <property type="project" value="UniProtKB-UniRule"/>
</dbReference>
<dbReference type="GO" id="GO:0061711">
    <property type="term" value="F:N(6)-L-threonylcarbamoyladenine synthase activity"/>
    <property type="evidence" value="ECO:0007669"/>
    <property type="project" value="UniProtKB-EC"/>
</dbReference>
<dbReference type="GO" id="GO:0002949">
    <property type="term" value="P:tRNA threonylcarbamoyladenosine modification"/>
    <property type="evidence" value="ECO:0007669"/>
    <property type="project" value="UniProtKB-UniRule"/>
</dbReference>
<dbReference type="CDD" id="cd24133">
    <property type="entry name" value="ASKHA_NBD_TsaD_bac"/>
    <property type="match status" value="1"/>
</dbReference>
<dbReference type="FunFam" id="3.30.420.40:FF:000012">
    <property type="entry name" value="tRNA N6-adenosine threonylcarbamoyltransferase"/>
    <property type="match status" value="1"/>
</dbReference>
<dbReference type="Gene3D" id="3.30.420.40">
    <property type="match status" value="2"/>
</dbReference>
<dbReference type="HAMAP" id="MF_01445">
    <property type="entry name" value="TsaD"/>
    <property type="match status" value="1"/>
</dbReference>
<dbReference type="InterPro" id="IPR043129">
    <property type="entry name" value="ATPase_NBD"/>
</dbReference>
<dbReference type="InterPro" id="IPR000905">
    <property type="entry name" value="Gcp-like_dom"/>
</dbReference>
<dbReference type="InterPro" id="IPR017861">
    <property type="entry name" value="KAE1/TsaD"/>
</dbReference>
<dbReference type="InterPro" id="IPR022450">
    <property type="entry name" value="TsaD"/>
</dbReference>
<dbReference type="NCBIfam" id="TIGR00329">
    <property type="entry name" value="gcp_kae1"/>
    <property type="match status" value="1"/>
</dbReference>
<dbReference type="NCBIfam" id="TIGR03723">
    <property type="entry name" value="T6A_TsaD_YgjD"/>
    <property type="match status" value="1"/>
</dbReference>
<dbReference type="PANTHER" id="PTHR11735">
    <property type="entry name" value="TRNA N6-ADENOSINE THREONYLCARBAMOYLTRANSFERASE"/>
    <property type="match status" value="1"/>
</dbReference>
<dbReference type="PANTHER" id="PTHR11735:SF6">
    <property type="entry name" value="TRNA N6-ADENOSINE THREONYLCARBAMOYLTRANSFERASE, MITOCHONDRIAL"/>
    <property type="match status" value="1"/>
</dbReference>
<dbReference type="Pfam" id="PF00814">
    <property type="entry name" value="TsaD"/>
    <property type="match status" value="1"/>
</dbReference>
<dbReference type="PRINTS" id="PR00789">
    <property type="entry name" value="OSIALOPTASE"/>
</dbReference>
<dbReference type="SUPFAM" id="SSF53067">
    <property type="entry name" value="Actin-like ATPase domain"/>
    <property type="match status" value="2"/>
</dbReference>
<comment type="function">
    <text evidence="1">Required for the formation of a threonylcarbamoyl group on adenosine at position 37 (t(6)A37) in tRNAs that read codons beginning with adenine. Is involved in the transfer of the threonylcarbamoyl moiety of threonylcarbamoyl-AMP (TC-AMP) to the N6 group of A37, together with TsaE and TsaB. TsaD likely plays a direct catalytic role in this reaction.</text>
</comment>
<comment type="catalytic activity">
    <reaction evidence="1">
        <text>L-threonylcarbamoyladenylate + adenosine(37) in tRNA = N(6)-L-threonylcarbamoyladenosine(37) in tRNA + AMP + H(+)</text>
        <dbReference type="Rhea" id="RHEA:37059"/>
        <dbReference type="Rhea" id="RHEA-COMP:10162"/>
        <dbReference type="Rhea" id="RHEA-COMP:10163"/>
        <dbReference type="ChEBI" id="CHEBI:15378"/>
        <dbReference type="ChEBI" id="CHEBI:73682"/>
        <dbReference type="ChEBI" id="CHEBI:74411"/>
        <dbReference type="ChEBI" id="CHEBI:74418"/>
        <dbReference type="ChEBI" id="CHEBI:456215"/>
        <dbReference type="EC" id="2.3.1.234"/>
    </reaction>
</comment>
<comment type="cofactor">
    <cofactor evidence="1">
        <name>Fe(2+)</name>
        <dbReference type="ChEBI" id="CHEBI:29033"/>
    </cofactor>
    <text evidence="1">Binds 1 Fe(2+) ion per subunit.</text>
</comment>
<comment type="subcellular location">
    <subcellularLocation>
        <location evidence="1">Cytoplasm</location>
    </subcellularLocation>
</comment>
<comment type="similarity">
    <text evidence="1">Belongs to the KAE1 / TsaD family.</text>
</comment>
<accession>Q5PAV6</accession>
<keyword id="KW-0012">Acyltransferase</keyword>
<keyword id="KW-0963">Cytoplasm</keyword>
<keyword id="KW-0408">Iron</keyword>
<keyword id="KW-0479">Metal-binding</keyword>
<keyword id="KW-0808">Transferase</keyword>
<keyword id="KW-0819">tRNA processing</keyword>
<gene>
    <name evidence="1" type="primary">tsaD</name>
    <name type="synonym">gcp</name>
    <name type="ordered locus">AM561</name>
</gene>
<reference key="1">
    <citation type="journal article" date="2005" name="Proc. Natl. Acad. Sci. U.S.A.">
        <title>Complete genome sequencing of Anaplasma marginale reveals that the surface is skewed to two superfamilies of outer membrane proteins.</title>
        <authorList>
            <person name="Brayton K.A."/>
            <person name="Kappmeyer L.S."/>
            <person name="Herndon D.R."/>
            <person name="Dark M.J."/>
            <person name="Tibbals D.L."/>
            <person name="Palmer G.H."/>
            <person name="McGuire T.C."/>
            <person name="Knowles D.P. Jr."/>
        </authorList>
    </citation>
    <scope>NUCLEOTIDE SEQUENCE [LARGE SCALE GENOMIC DNA]</scope>
    <source>
        <strain>St. Maries</strain>
    </source>
</reference>
<organism>
    <name type="scientific">Anaplasma marginale (strain St. Maries)</name>
    <dbReference type="NCBI Taxonomy" id="234826"/>
    <lineage>
        <taxon>Bacteria</taxon>
        <taxon>Pseudomonadati</taxon>
        <taxon>Pseudomonadota</taxon>
        <taxon>Alphaproteobacteria</taxon>
        <taxon>Rickettsiales</taxon>
        <taxon>Anaplasmataceae</taxon>
        <taxon>Anaplasma</taxon>
    </lineage>
</organism>
<evidence type="ECO:0000255" key="1">
    <source>
        <dbReference type="HAMAP-Rule" id="MF_01445"/>
    </source>
</evidence>
<protein>
    <recommendedName>
        <fullName evidence="1">tRNA N6-adenosine threonylcarbamoyltransferase</fullName>
        <ecNumber evidence="1">2.3.1.234</ecNumber>
    </recommendedName>
    <alternativeName>
        <fullName evidence="1">N6-L-threonylcarbamoyladenine synthase</fullName>
        <shortName evidence="1">t(6)A synthase</shortName>
    </alternativeName>
    <alternativeName>
        <fullName evidence="1">t(6)A37 threonylcarbamoyladenosine biosynthesis protein TsaD</fullName>
    </alternativeName>
    <alternativeName>
        <fullName evidence="1">tRNA threonylcarbamoyladenosine biosynthesis protein TsaD</fullName>
    </alternativeName>
</protein>
<proteinExistence type="inferred from homology"/>
<feature type="chain" id="PRO_0000303255" description="tRNA N6-adenosine threonylcarbamoyltransferase">
    <location>
        <begin position="1"/>
        <end position="341"/>
    </location>
</feature>
<feature type="binding site" evidence="1">
    <location>
        <position position="113"/>
    </location>
    <ligand>
        <name>Fe cation</name>
        <dbReference type="ChEBI" id="CHEBI:24875"/>
    </ligand>
</feature>
<feature type="binding site" evidence="1">
    <location>
        <position position="117"/>
    </location>
    <ligand>
        <name>Fe cation</name>
        <dbReference type="ChEBI" id="CHEBI:24875"/>
    </ligand>
</feature>
<feature type="binding site" evidence="1">
    <location>
        <begin position="136"/>
        <end position="140"/>
    </location>
    <ligand>
        <name>substrate</name>
    </ligand>
</feature>
<feature type="binding site" evidence="1">
    <location>
        <position position="169"/>
    </location>
    <ligand>
        <name>substrate</name>
    </ligand>
</feature>
<feature type="binding site" evidence="1">
    <location>
        <position position="182"/>
    </location>
    <ligand>
        <name>substrate</name>
    </ligand>
</feature>
<feature type="binding site" evidence="1">
    <location>
        <position position="280"/>
    </location>
    <ligand>
        <name>substrate</name>
    </ligand>
</feature>
<feature type="binding site" evidence="1">
    <location>
        <position position="308"/>
    </location>
    <ligand>
        <name>Fe cation</name>
        <dbReference type="ChEBI" id="CHEBI:24875"/>
    </ligand>
</feature>